<sequence length="406" mass="47673">MKKKQQHPGGGADPWPHGAPMGGAPPGLGSWKRRVPLLPFLRFSLRDYGFCMATLLVFCLGSLLYQLSGGPPRFLLDLRQYLGNSTYLDDHGPPPSKVLPFPSQVVYNRVGKCGSRTVVLLLRILSEKHGFNLVTSDIHNKTRLTKNEQMELIKNISTAEQPYLFTRHVHFLNFSRFGGDQPVYINIIRDPVNRFLSNYFFRRFGDWRGEQNHMIRTPSMRQEERYLDINECILENYPECSNPRLFYIIPYFCGQHPRCREPGEWALERAKLNVNENFLLVGILEELEDVLLLLERFLPHYFKGVLSIYKDPEHRKLGNMTVTVKKTVPSPEAVQILYQRMRYEYEFYHYVKEQFHLLKRKFGLKSHVSKPPLRPHFFIPTPLETEEPIDDEEQDDEKWLEDIYKR</sequence>
<evidence type="ECO:0000250" key="1"/>
<evidence type="ECO:0000255" key="2"/>
<evidence type="ECO:0000256" key="3">
    <source>
        <dbReference type="SAM" id="MobiDB-lite"/>
    </source>
</evidence>
<evidence type="ECO:0000269" key="4">
    <source>
    </source>
</evidence>
<evidence type="ECO:0000269" key="5">
    <source>
    </source>
</evidence>
<evidence type="ECO:0000303" key="6">
    <source>
    </source>
</evidence>
<evidence type="ECO:0000305" key="7"/>
<evidence type="ECO:0000312" key="8">
    <source>
        <dbReference type="HGNC" id="HGNC:17223"/>
    </source>
</evidence>
<evidence type="ECO:0000312" key="9">
    <source>
        <dbReference type="Proteomes" id="UP000005640"/>
    </source>
</evidence>
<keyword id="KW-0325">Glycoprotein</keyword>
<keyword id="KW-0333">Golgi apparatus</keyword>
<keyword id="KW-0472">Membrane</keyword>
<keyword id="KW-1267">Proteomics identification</keyword>
<keyword id="KW-1185">Reference proteome</keyword>
<keyword id="KW-0735">Signal-anchor</keyword>
<keyword id="KW-0808">Transferase</keyword>
<keyword id="KW-0812">Transmembrane</keyword>
<keyword id="KW-1133">Transmembrane helix</keyword>
<proteinExistence type="evidence at protein level"/>
<name>UST_HUMAN</name>
<gene>
    <name evidence="8" type="primary">UST</name>
    <name type="synonym">DS2ST</name>
</gene>
<organism evidence="9">
    <name type="scientific">Homo sapiens</name>
    <name type="common">Human</name>
    <dbReference type="NCBI Taxonomy" id="9606"/>
    <lineage>
        <taxon>Eukaryota</taxon>
        <taxon>Metazoa</taxon>
        <taxon>Chordata</taxon>
        <taxon>Craniata</taxon>
        <taxon>Vertebrata</taxon>
        <taxon>Euteleostomi</taxon>
        <taxon>Mammalia</taxon>
        <taxon>Eutheria</taxon>
        <taxon>Euarchontoglires</taxon>
        <taxon>Primates</taxon>
        <taxon>Haplorrhini</taxon>
        <taxon>Catarrhini</taxon>
        <taxon>Hominidae</taxon>
        <taxon>Homo</taxon>
    </lineage>
</organism>
<comment type="function">
    <text evidence="4 5">Sulfotransferase that catalyzes the transfer of sulfate to the position 2 of uronyl residues in glycosaminoglycan chains (PubMed:10187838, PubMed:17227754). Has mainly activity toward iduronyl residues in dermatan sulfate, and weaker activity toward glucuronyl residues of chondroitin sulfate (PubMed:10187838). Has little to no activity toward desulfated N-resulfated heparin or N-sulfoheparosan (PubMed:10187838, PubMed:17227754).</text>
</comment>
<comment type="subcellular location">
    <subcellularLocation>
        <location evidence="1">Golgi apparatus membrane</location>
        <topology evidence="1">Single-pass type II membrane protein</topology>
    </subcellularLocation>
</comment>
<comment type="tissue specificity">
    <text evidence="4">Widely expressed.</text>
</comment>
<comment type="similarity">
    <text evidence="7">Belongs to the sulfotransferase 3 family.</text>
</comment>
<feature type="chain" id="PRO_0000207681" description="Uronyl 2-sulfotransferase">
    <location>
        <begin position="1"/>
        <end position="406"/>
    </location>
</feature>
<feature type="topological domain" description="Cytoplasmic" evidence="2">
    <location>
        <begin position="1"/>
        <end position="49"/>
    </location>
</feature>
<feature type="transmembrane region" description="Helical; Signal-anchor for type II membrane protein" evidence="2">
    <location>
        <begin position="50"/>
        <end position="70"/>
    </location>
</feature>
<feature type="topological domain" description="Lumenal" evidence="2">
    <location>
        <begin position="71"/>
        <end position="406"/>
    </location>
</feature>
<feature type="region of interest" description="Disordered" evidence="3">
    <location>
        <begin position="387"/>
        <end position="406"/>
    </location>
</feature>
<feature type="compositionally biased region" description="Acidic residues" evidence="3">
    <location>
        <begin position="387"/>
        <end position="399"/>
    </location>
</feature>
<feature type="active site" evidence="5">
    <location>
        <position position="168"/>
    </location>
</feature>
<feature type="glycosylation site" description="N-linked (GlcNAc...) asparagine" evidence="2">
    <location>
        <position position="84"/>
    </location>
</feature>
<feature type="glycosylation site" description="N-linked (GlcNAc...) asparagine" evidence="2">
    <location>
        <position position="140"/>
    </location>
</feature>
<feature type="glycosylation site" description="N-linked (GlcNAc...) asparagine" evidence="2">
    <location>
        <position position="155"/>
    </location>
</feature>
<feature type="glycosylation site" description="N-linked (GlcNAc...) asparagine" evidence="2">
    <location>
        <position position="173"/>
    </location>
</feature>
<feature type="glycosylation site" description="N-linked (GlcNAc...) asparagine" evidence="2">
    <location>
        <position position="319"/>
    </location>
</feature>
<feature type="sequence variant" id="VAR_059819" description="In dbSNP:rs9498146.">
    <original>M</original>
    <variation>L</variation>
    <location>
        <position position="21"/>
    </location>
</feature>
<feature type="mutagenesis site" description="Severe reduction of catalytic activity but no effect on 3'-phosphoadenylyl sulfate substrate binding; probably disrupts binding to the carboxyl group of the iduronic acid of the polysaccharide substrate." evidence="5">
    <original>R</original>
    <variation>A</variation>
    <location>
        <position position="109"/>
    </location>
</feature>
<feature type="mutagenesis site" description="Loss of catalytic activity due to disruption of binding to the substrate 3'-phosphoadenylyl sulfate." evidence="5">
    <original>K</original>
    <variation>A</variation>
    <location>
        <position position="112"/>
    </location>
</feature>
<feature type="mutagenesis site" description="Severe reduction of catalytic activity due to disruption of binding to the substrate 3'-phosphoadenylyl sulfate." evidence="5">
    <original>C</original>
    <variation>A</variation>
    <location>
        <position position="113"/>
    </location>
</feature>
<feature type="mutagenesis site" description="Loss of catalytic activity due to disruption of binding to the substrate 3'-phosphoadenylyl sulfate." evidence="5">
    <original>S</original>
    <variation>A</variation>
    <location>
        <position position="115"/>
    </location>
</feature>
<feature type="mutagenesis site" description="Severe reduction of catalytic activity due to disruption of binding to the substrate 3'-phosphoadenylyl sulfate." evidence="5">
    <original>R</original>
    <variation>A</variation>
    <location>
        <position position="116"/>
    </location>
</feature>
<feature type="mutagenesis site" description="No loss of catalytic activity." evidence="5">
    <original>T</original>
    <variation>A</variation>
    <location>
        <position position="166"/>
    </location>
</feature>
<feature type="mutagenesis site" description="Some loss of catalytic activity." evidence="5">
    <original>R</original>
    <variation>A</variation>
    <location>
        <position position="167"/>
    </location>
</feature>
<feature type="mutagenesis site" description="Abolishes catalytic activity but does not affect 3'-phosphoadenylyl sulfate substrate binding." evidence="5">
    <original>H</original>
    <variation>A</variation>
    <location>
        <position position="168"/>
    </location>
</feature>
<feature type="mutagenesis site" description="Loss of catalytic activity due to disruption of binding to the substrate 3'-phosphoadenylyl sulfate." evidence="5">
    <original>R</original>
    <variation>A</variation>
    <location>
        <position position="189"/>
    </location>
</feature>
<feature type="mutagenesis site" description="Severe reduction of catalytic activity due to disruption of binding to the substrate 3'-phosphoadenylyl sulfate." evidence="5">
    <original>S</original>
    <variation>A</variation>
    <location>
        <position position="197"/>
    </location>
</feature>
<feature type="mutagenesis site" description="Complete loss of catalytic activity but only moderate reduction of 3'-phosphoadenylyl sulfate substrate binding; probably disrupts binding to the polysaccharide substrate." evidence="5">
    <original>R</original>
    <variation>A</variation>
    <location>
        <position position="203"/>
    </location>
</feature>
<feature type="mutagenesis site" description="Complete loss of catalytic activity but only moderate reduction of 3'-phosphoadenylyl sulfate substrate binding; probably disrupts binding to the polysaccharide substrate." evidence="5">
    <original>D</original>
    <variation>A</variation>
    <location>
        <position position="206"/>
    </location>
</feature>
<feature type="mutagenesis site" description="No effect on catalytic activity." evidence="5">
    <original>R</original>
    <variation>A</variation>
    <location>
        <position position="221"/>
    </location>
</feature>
<feature type="mutagenesis site" description="Severely abrogates catalytic activity but does not affect 3'-phosphoadenylyl sulfate substrate binding; may be involved in polysaccharide substrate binding specificity." evidence="5">
    <original>T</original>
    <variation>A</variation>
    <variation>R</variation>
    <location>
        <position position="321"/>
    </location>
</feature>
<accession>Q9Y2C2</accession>
<accession>B2RCX6</accession>
<reference key="1">
    <citation type="journal article" date="1999" name="J. Biol. Chem.">
        <title>Molecular cloning and characterization of a human uronyl 2-sulfotransferase that sulfates iduronyl and glucuronyl residues in dermatan/chondroitin sulfate.</title>
        <authorList>
            <person name="Kobayashi M."/>
            <person name="Sugumaran G."/>
            <person name="Liu J."/>
            <person name="Shworak N.W."/>
            <person name="Silbert J.E."/>
            <person name="Rosenberg R.D."/>
        </authorList>
    </citation>
    <scope>NUCLEOTIDE SEQUENCE [MRNA]</scope>
    <scope>ENZYME ACTIVITY</scope>
    <scope>TISSUE SPECIFICITY</scope>
    <source>
        <tissue>Lymphoma</tissue>
    </source>
</reference>
<reference key="2">
    <citation type="journal article" date="2004" name="Nat. Genet.">
        <title>Complete sequencing and characterization of 21,243 full-length human cDNAs.</title>
        <authorList>
            <person name="Ota T."/>
            <person name="Suzuki Y."/>
            <person name="Nishikawa T."/>
            <person name="Otsuki T."/>
            <person name="Sugiyama T."/>
            <person name="Irie R."/>
            <person name="Wakamatsu A."/>
            <person name="Hayashi K."/>
            <person name="Sato H."/>
            <person name="Nagai K."/>
            <person name="Kimura K."/>
            <person name="Makita H."/>
            <person name="Sekine M."/>
            <person name="Obayashi M."/>
            <person name="Nishi T."/>
            <person name="Shibahara T."/>
            <person name="Tanaka T."/>
            <person name="Ishii S."/>
            <person name="Yamamoto J."/>
            <person name="Saito K."/>
            <person name="Kawai Y."/>
            <person name="Isono Y."/>
            <person name="Nakamura Y."/>
            <person name="Nagahari K."/>
            <person name="Murakami K."/>
            <person name="Yasuda T."/>
            <person name="Iwayanagi T."/>
            <person name="Wagatsuma M."/>
            <person name="Shiratori A."/>
            <person name="Sudo H."/>
            <person name="Hosoiri T."/>
            <person name="Kaku Y."/>
            <person name="Kodaira H."/>
            <person name="Kondo H."/>
            <person name="Sugawara M."/>
            <person name="Takahashi M."/>
            <person name="Kanda K."/>
            <person name="Yokoi T."/>
            <person name="Furuya T."/>
            <person name="Kikkawa E."/>
            <person name="Omura Y."/>
            <person name="Abe K."/>
            <person name="Kamihara K."/>
            <person name="Katsuta N."/>
            <person name="Sato K."/>
            <person name="Tanikawa M."/>
            <person name="Yamazaki M."/>
            <person name="Ninomiya K."/>
            <person name="Ishibashi T."/>
            <person name="Yamashita H."/>
            <person name="Murakawa K."/>
            <person name="Fujimori K."/>
            <person name="Tanai H."/>
            <person name="Kimata M."/>
            <person name="Watanabe M."/>
            <person name="Hiraoka S."/>
            <person name="Chiba Y."/>
            <person name="Ishida S."/>
            <person name="Ono Y."/>
            <person name="Takiguchi S."/>
            <person name="Watanabe S."/>
            <person name="Yosida M."/>
            <person name="Hotuta T."/>
            <person name="Kusano J."/>
            <person name="Kanehori K."/>
            <person name="Takahashi-Fujii A."/>
            <person name="Hara H."/>
            <person name="Tanase T.-O."/>
            <person name="Nomura Y."/>
            <person name="Togiya S."/>
            <person name="Komai F."/>
            <person name="Hara R."/>
            <person name="Takeuchi K."/>
            <person name="Arita M."/>
            <person name="Imose N."/>
            <person name="Musashino K."/>
            <person name="Yuuki H."/>
            <person name="Oshima A."/>
            <person name="Sasaki N."/>
            <person name="Aotsuka S."/>
            <person name="Yoshikawa Y."/>
            <person name="Matsunawa H."/>
            <person name="Ichihara T."/>
            <person name="Shiohata N."/>
            <person name="Sano S."/>
            <person name="Moriya S."/>
            <person name="Momiyama H."/>
            <person name="Satoh N."/>
            <person name="Takami S."/>
            <person name="Terashima Y."/>
            <person name="Suzuki O."/>
            <person name="Nakagawa S."/>
            <person name="Senoh A."/>
            <person name="Mizoguchi H."/>
            <person name="Goto Y."/>
            <person name="Shimizu F."/>
            <person name="Wakebe H."/>
            <person name="Hishigaki H."/>
            <person name="Watanabe T."/>
            <person name="Sugiyama A."/>
            <person name="Takemoto M."/>
            <person name="Kawakami B."/>
            <person name="Yamazaki M."/>
            <person name="Watanabe K."/>
            <person name="Kumagai A."/>
            <person name="Itakura S."/>
            <person name="Fukuzumi Y."/>
            <person name="Fujimori Y."/>
            <person name="Komiyama M."/>
            <person name="Tashiro H."/>
            <person name="Tanigami A."/>
            <person name="Fujiwara T."/>
            <person name="Ono T."/>
            <person name="Yamada K."/>
            <person name="Fujii Y."/>
            <person name="Ozaki K."/>
            <person name="Hirao M."/>
            <person name="Ohmori Y."/>
            <person name="Kawabata A."/>
            <person name="Hikiji T."/>
            <person name="Kobatake N."/>
            <person name="Inagaki H."/>
            <person name="Ikema Y."/>
            <person name="Okamoto S."/>
            <person name="Okitani R."/>
            <person name="Kawakami T."/>
            <person name="Noguchi S."/>
            <person name="Itoh T."/>
            <person name="Shigeta K."/>
            <person name="Senba T."/>
            <person name="Matsumura K."/>
            <person name="Nakajima Y."/>
            <person name="Mizuno T."/>
            <person name="Morinaga M."/>
            <person name="Sasaki M."/>
            <person name="Togashi T."/>
            <person name="Oyama M."/>
            <person name="Hata H."/>
            <person name="Watanabe M."/>
            <person name="Komatsu T."/>
            <person name="Mizushima-Sugano J."/>
            <person name="Satoh T."/>
            <person name="Shirai Y."/>
            <person name="Takahashi Y."/>
            <person name="Nakagawa K."/>
            <person name="Okumura K."/>
            <person name="Nagase T."/>
            <person name="Nomura N."/>
            <person name="Kikuchi H."/>
            <person name="Masuho Y."/>
            <person name="Yamashita R."/>
            <person name="Nakai K."/>
            <person name="Yada T."/>
            <person name="Nakamura Y."/>
            <person name="Ohara O."/>
            <person name="Isogai T."/>
            <person name="Sugano S."/>
        </authorList>
    </citation>
    <scope>NUCLEOTIDE SEQUENCE [LARGE SCALE MRNA]</scope>
    <source>
        <tissue>Cerebellum</tissue>
    </source>
</reference>
<reference key="3">
    <citation type="journal article" date="2003" name="Nature">
        <title>The DNA sequence and analysis of human chromosome 6.</title>
        <authorList>
            <person name="Mungall A.J."/>
            <person name="Palmer S.A."/>
            <person name="Sims S.K."/>
            <person name="Edwards C.A."/>
            <person name="Ashurst J.L."/>
            <person name="Wilming L."/>
            <person name="Jones M.C."/>
            <person name="Horton R."/>
            <person name="Hunt S.E."/>
            <person name="Scott C.E."/>
            <person name="Gilbert J.G.R."/>
            <person name="Clamp M.E."/>
            <person name="Bethel G."/>
            <person name="Milne S."/>
            <person name="Ainscough R."/>
            <person name="Almeida J.P."/>
            <person name="Ambrose K.D."/>
            <person name="Andrews T.D."/>
            <person name="Ashwell R.I.S."/>
            <person name="Babbage A.K."/>
            <person name="Bagguley C.L."/>
            <person name="Bailey J."/>
            <person name="Banerjee R."/>
            <person name="Barker D.J."/>
            <person name="Barlow K.F."/>
            <person name="Bates K."/>
            <person name="Beare D.M."/>
            <person name="Beasley H."/>
            <person name="Beasley O."/>
            <person name="Bird C.P."/>
            <person name="Blakey S.E."/>
            <person name="Bray-Allen S."/>
            <person name="Brook J."/>
            <person name="Brown A.J."/>
            <person name="Brown J.Y."/>
            <person name="Burford D.C."/>
            <person name="Burrill W."/>
            <person name="Burton J."/>
            <person name="Carder C."/>
            <person name="Carter N.P."/>
            <person name="Chapman J.C."/>
            <person name="Clark S.Y."/>
            <person name="Clark G."/>
            <person name="Clee C.M."/>
            <person name="Clegg S."/>
            <person name="Cobley V."/>
            <person name="Collier R.E."/>
            <person name="Collins J.E."/>
            <person name="Colman L.K."/>
            <person name="Corby N.R."/>
            <person name="Coville G.J."/>
            <person name="Culley K.M."/>
            <person name="Dhami P."/>
            <person name="Davies J."/>
            <person name="Dunn M."/>
            <person name="Earthrowl M.E."/>
            <person name="Ellington A.E."/>
            <person name="Evans K.A."/>
            <person name="Faulkner L."/>
            <person name="Francis M.D."/>
            <person name="Frankish A."/>
            <person name="Frankland J."/>
            <person name="French L."/>
            <person name="Garner P."/>
            <person name="Garnett J."/>
            <person name="Ghori M.J."/>
            <person name="Gilby L.M."/>
            <person name="Gillson C.J."/>
            <person name="Glithero R.J."/>
            <person name="Grafham D.V."/>
            <person name="Grant M."/>
            <person name="Gribble S."/>
            <person name="Griffiths C."/>
            <person name="Griffiths M.N.D."/>
            <person name="Hall R."/>
            <person name="Halls K.S."/>
            <person name="Hammond S."/>
            <person name="Harley J.L."/>
            <person name="Hart E.A."/>
            <person name="Heath P.D."/>
            <person name="Heathcott R."/>
            <person name="Holmes S.J."/>
            <person name="Howden P.J."/>
            <person name="Howe K.L."/>
            <person name="Howell G.R."/>
            <person name="Huckle E."/>
            <person name="Humphray S.J."/>
            <person name="Humphries M.D."/>
            <person name="Hunt A.R."/>
            <person name="Johnson C.M."/>
            <person name="Joy A.A."/>
            <person name="Kay M."/>
            <person name="Keenan S.J."/>
            <person name="Kimberley A.M."/>
            <person name="King A."/>
            <person name="Laird G.K."/>
            <person name="Langford C."/>
            <person name="Lawlor S."/>
            <person name="Leongamornlert D.A."/>
            <person name="Leversha M."/>
            <person name="Lloyd C.R."/>
            <person name="Lloyd D.M."/>
            <person name="Loveland J.E."/>
            <person name="Lovell J."/>
            <person name="Martin S."/>
            <person name="Mashreghi-Mohammadi M."/>
            <person name="Maslen G.L."/>
            <person name="Matthews L."/>
            <person name="McCann O.T."/>
            <person name="McLaren S.J."/>
            <person name="McLay K."/>
            <person name="McMurray A."/>
            <person name="Moore M.J.F."/>
            <person name="Mullikin J.C."/>
            <person name="Niblett D."/>
            <person name="Nickerson T."/>
            <person name="Novik K.L."/>
            <person name="Oliver K."/>
            <person name="Overton-Larty E.K."/>
            <person name="Parker A."/>
            <person name="Patel R."/>
            <person name="Pearce A.V."/>
            <person name="Peck A.I."/>
            <person name="Phillimore B.J.C.T."/>
            <person name="Phillips S."/>
            <person name="Plumb R.W."/>
            <person name="Porter K.M."/>
            <person name="Ramsey Y."/>
            <person name="Ranby S.A."/>
            <person name="Rice C.M."/>
            <person name="Ross M.T."/>
            <person name="Searle S.M."/>
            <person name="Sehra H.K."/>
            <person name="Sheridan E."/>
            <person name="Skuce C.D."/>
            <person name="Smith S."/>
            <person name="Smith M."/>
            <person name="Spraggon L."/>
            <person name="Squares S.L."/>
            <person name="Steward C.A."/>
            <person name="Sycamore N."/>
            <person name="Tamlyn-Hall G."/>
            <person name="Tester J."/>
            <person name="Theaker A.J."/>
            <person name="Thomas D.W."/>
            <person name="Thorpe A."/>
            <person name="Tracey A."/>
            <person name="Tromans A."/>
            <person name="Tubby B."/>
            <person name="Wall M."/>
            <person name="Wallis J.M."/>
            <person name="West A.P."/>
            <person name="White S.S."/>
            <person name="Whitehead S.L."/>
            <person name="Whittaker H."/>
            <person name="Wild A."/>
            <person name="Willey D.J."/>
            <person name="Wilmer T.E."/>
            <person name="Wood J.M."/>
            <person name="Wray P.W."/>
            <person name="Wyatt J.C."/>
            <person name="Young L."/>
            <person name="Younger R.M."/>
            <person name="Bentley D.R."/>
            <person name="Coulson A."/>
            <person name="Durbin R.M."/>
            <person name="Hubbard T."/>
            <person name="Sulston J.E."/>
            <person name="Dunham I."/>
            <person name="Rogers J."/>
            <person name="Beck S."/>
        </authorList>
    </citation>
    <scope>NUCLEOTIDE SEQUENCE [LARGE SCALE GENOMIC DNA]</scope>
</reference>
<reference key="4">
    <citation type="submission" date="2005-09" db="EMBL/GenBank/DDBJ databases">
        <authorList>
            <person name="Mural R.J."/>
            <person name="Istrail S."/>
            <person name="Sutton G.G."/>
            <person name="Florea L."/>
            <person name="Halpern A.L."/>
            <person name="Mobarry C.M."/>
            <person name="Lippert R."/>
            <person name="Walenz B."/>
            <person name="Shatkay H."/>
            <person name="Dew I."/>
            <person name="Miller J.R."/>
            <person name="Flanigan M.J."/>
            <person name="Edwards N.J."/>
            <person name="Bolanos R."/>
            <person name="Fasulo D."/>
            <person name="Halldorsson B.V."/>
            <person name="Hannenhalli S."/>
            <person name="Turner R."/>
            <person name="Yooseph S."/>
            <person name="Lu F."/>
            <person name="Nusskern D.R."/>
            <person name="Shue B.C."/>
            <person name="Zheng X.H."/>
            <person name="Zhong F."/>
            <person name="Delcher A.L."/>
            <person name="Huson D.H."/>
            <person name="Kravitz S.A."/>
            <person name="Mouchard L."/>
            <person name="Reinert K."/>
            <person name="Remington K.A."/>
            <person name="Clark A.G."/>
            <person name="Waterman M.S."/>
            <person name="Eichler E.E."/>
            <person name="Adams M.D."/>
            <person name="Hunkapiller M.W."/>
            <person name="Myers E.W."/>
            <person name="Venter J.C."/>
        </authorList>
    </citation>
    <scope>NUCLEOTIDE SEQUENCE [LARGE SCALE GENOMIC DNA]</scope>
</reference>
<reference key="5">
    <citation type="journal article" date="2004" name="Genome Res.">
        <title>The status, quality, and expansion of the NIH full-length cDNA project: the Mammalian Gene Collection (MGC).</title>
        <authorList>
            <consortium name="The MGC Project Team"/>
        </authorList>
    </citation>
    <scope>NUCLEOTIDE SEQUENCE [LARGE SCALE MRNA]</scope>
    <source>
        <tissue>Brain cortex</tissue>
    </source>
</reference>
<reference key="6">
    <citation type="journal article" date="2007" name="J. Biol. Chem.">
        <title>Mutational study of heparan sulfate 2-O-sulfotransferase and chondroitin sulfate 2-O-sulfotransferase.</title>
        <authorList>
            <person name="Xu D."/>
            <person name="Song D."/>
            <person name="Pedersen L.C."/>
            <person name="Liu J."/>
        </authorList>
    </citation>
    <scope>FUNCTION</scope>
    <scope>CATALYTIC ACTIVITY</scope>
    <scope>ACTIVE SITE</scope>
    <scope>MUTAGENESIS OF ARG-109; LYS-112; CYS-113; SER-115; ARG-116; THR-166; ARG-167; HIS-168; ARG-189; SER-197; ARG-203; ASP-206; ARG-221 AND THR-321</scope>
</reference>
<protein>
    <recommendedName>
        <fullName evidence="8">Uronyl 2-sulfotransferase</fullName>
        <ecNumber evidence="5">2.8.2.-</ecNumber>
    </recommendedName>
    <alternativeName>
        <fullName evidence="6">Chondroitin sulfate 2-O-sulfotransferase</fullName>
        <shortName evidence="6">CS-2OST</shortName>
    </alternativeName>
</protein>
<dbReference type="EC" id="2.8.2.-" evidence="5"/>
<dbReference type="EMBL" id="AB020316">
    <property type="protein sequence ID" value="BAA77510.1"/>
    <property type="molecule type" value="mRNA"/>
</dbReference>
<dbReference type="EMBL" id="AK315320">
    <property type="protein sequence ID" value="BAG37723.1"/>
    <property type="molecule type" value="mRNA"/>
</dbReference>
<dbReference type="EMBL" id="AL357992">
    <property type="status" value="NOT_ANNOTATED_CDS"/>
    <property type="molecule type" value="Genomic_DNA"/>
</dbReference>
<dbReference type="EMBL" id="AL359252">
    <property type="status" value="NOT_ANNOTATED_CDS"/>
    <property type="molecule type" value="Genomic_DNA"/>
</dbReference>
<dbReference type="EMBL" id="AL590485">
    <property type="status" value="NOT_ANNOTATED_CDS"/>
    <property type="molecule type" value="Genomic_DNA"/>
</dbReference>
<dbReference type="EMBL" id="AL807246">
    <property type="status" value="NOT_ANNOTATED_CDS"/>
    <property type="molecule type" value="Genomic_DNA"/>
</dbReference>
<dbReference type="EMBL" id="CH471051">
    <property type="protein sequence ID" value="EAW47812.1"/>
    <property type="molecule type" value="Genomic_DNA"/>
</dbReference>
<dbReference type="EMBL" id="BC093668">
    <property type="protein sequence ID" value="AAH93668.1"/>
    <property type="molecule type" value="mRNA"/>
</dbReference>
<dbReference type="EMBL" id="BC093694">
    <property type="protein sequence ID" value="AAH93694.1"/>
    <property type="molecule type" value="mRNA"/>
</dbReference>
<dbReference type="CCDS" id="CCDS5213.1"/>
<dbReference type="RefSeq" id="NP_005706.1">
    <property type="nucleotide sequence ID" value="NM_005715.3"/>
</dbReference>
<dbReference type="SMR" id="Q9Y2C2"/>
<dbReference type="BioGRID" id="115398">
    <property type="interactions" value="38"/>
</dbReference>
<dbReference type="FunCoup" id="Q9Y2C2">
    <property type="interactions" value="436"/>
</dbReference>
<dbReference type="IntAct" id="Q9Y2C2">
    <property type="interactions" value="34"/>
</dbReference>
<dbReference type="MINT" id="Q9Y2C2"/>
<dbReference type="STRING" id="9606.ENSP00000356433"/>
<dbReference type="GlyConnect" id="1887">
    <property type="glycosylation" value="1 N-Linked glycan (1 site)"/>
</dbReference>
<dbReference type="GlyCosmos" id="Q9Y2C2">
    <property type="glycosylation" value="5 sites, 1 glycan"/>
</dbReference>
<dbReference type="GlyGen" id="Q9Y2C2">
    <property type="glycosylation" value="7 sites, 9 N-linked glycans (5 sites), 1 O-linked glycan (2 sites)"/>
</dbReference>
<dbReference type="iPTMnet" id="Q9Y2C2"/>
<dbReference type="PhosphoSitePlus" id="Q9Y2C2"/>
<dbReference type="BioMuta" id="UST"/>
<dbReference type="DMDM" id="68052988"/>
<dbReference type="jPOST" id="Q9Y2C2"/>
<dbReference type="MassIVE" id="Q9Y2C2"/>
<dbReference type="PaxDb" id="9606-ENSP00000356433"/>
<dbReference type="PeptideAtlas" id="Q9Y2C2"/>
<dbReference type="ProteomicsDB" id="85723"/>
<dbReference type="Pumba" id="Q9Y2C2"/>
<dbReference type="Antibodypedia" id="33260">
    <property type="antibodies" value="163 antibodies from 18 providers"/>
</dbReference>
<dbReference type="DNASU" id="10090"/>
<dbReference type="Ensembl" id="ENST00000367463.5">
    <property type="protein sequence ID" value="ENSP00000356433.4"/>
    <property type="gene ID" value="ENSG00000111962.8"/>
</dbReference>
<dbReference type="GeneID" id="10090"/>
<dbReference type="KEGG" id="hsa:10090"/>
<dbReference type="MANE-Select" id="ENST00000367463.5">
    <property type="protein sequence ID" value="ENSP00000356433.4"/>
    <property type="RefSeq nucleotide sequence ID" value="NM_005715.3"/>
    <property type="RefSeq protein sequence ID" value="NP_005706.1"/>
</dbReference>
<dbReference type="UCSC" id="uc003qmg.4">
    <property type="organism name" value="human"/>
</dbReference>
<dbReference type="AGR" id="HGNC:17223"/>
<dbReference type="CTD" id="10090"/>
<dbReference type="DisGeNET" id="10090"/>
<dbReference type="GeneCards" id="UST"/>
<dbReference type="HGNC" id="HGNC:17223">
    <property type="gene designation" value="UST"/>
</dbReference>
<dbReference type="HPA" id="ENSG00000111962">
    <property type="expression patterns" value="Low tissue specificity"/>
</dbReference>
<dbReference type="MIM" id="610752">
    <property type="type" value="gene"/>
</dbReference>
<dbReference type="neXtProt" id="NX_Q9Y2C2"/>
<dbReference type="OpenTargets" id="ENSG00000111962"/>
<dbReference type="PharmGKB" id="PA38213"/>
<dbReference type="VEuPathDB" id="HostDB:ENSG00000111962"/>
<dbReference type="eggNOG" id="KOG3922">
    <property type="taxonomic scope" value="Eukaryota"/>
</dbReference>
<dbReference type="GeneTree" id="ENSGT00530000063408"/>
<dbReference type="HOGENOM" id="CLU_056190_0_0_1"/>
<dbReference type="InParanoid" id="Q9Y2C2"/>
<dbReference type="OMA" id="PMPIYVN"/>
<dbReference type="OrthoDB" id="10019582at2759"/>
<dbReference type="PAN-GO" id="Q9Y2C2">
    <property type="GO annotations" value="1 GO annotation based on evolutionary models"/>
</dbReference>
<dbReference type="PhylomeDB" id="Q9Y2C2"/>
<dbReference type="TreeFam" id="TF315238"/>
<dbReference type="BioCyc" id="MetaCyc:ENSG00000111962-MONOMER"/>
<dbReference type="PathwayCommons" id="Q9Y2C2"/>
<dbReference type="Reactome" id="R-HSA-2022923">
    <property type="pathway name" value="Dermatan sulfate biosynthesis"/>
</dbReference>
<dbReference type="SignaLink" id="Q9Y2C2"/>
<dbReference type="BioGRID-ORCS" id="10090">
    <property type="hits" value="11 hits in 1147 CRISPR screens"/>
</dbReference>
<dbReference type="ChiTaRS" id="UST">
    <property type="organism name" value="human"/>
</dbReference>
<dbReference type="GenomeRNAi" id="10090"/>
<dbReference type="Pharos" id="Q9Y2C2">
    <property type="development level" value="Tbio"/>
</dbReference>
<dbReference type="PRO" id="PR:Q9Y2C2"/>
<dbReference type="Proteomes" id="UP000005640">
    <property type="component" value="Chromosome 6"/>
</dbReference>
<dbReference type="RNAct" id="Q9Y2C2">
    <property type="molecule type" value="protein"/>
</dbReference>
<dbReference type="Bgee" id="ENSG00000111962">
    <property type="expression patterns" value="Expressed in pons and 183 other cell types or tissues"/>
</dbReference>
<dbReference type="GO" id="GO:0000139">
    <property type="term" value="C:Golgi membrane"/>
    <property type="evidence" value="ECO:0000304"/>
    <property type="project" value="Reactome"/>
</dbReference>
<dbReference type="GO" id="GO:0016020">
    <property type="term" value="C:membrane"/>
    <property type="evidence" value="ECO:0000304"/>
    <property type="project" value="ProtInc"/>
</dbReference>
<dbReference type="GO" id="GO:0050656">
    <property type="term" value="F:3'-phosphoadenosine 5'-phosphosulfate binding"/>
    <property type="evidence" value="ECO:0000314"/>
    <property type="project" value="UniProtKB"/>
</dbReference>
<dbReference type="GO" id="GO:0034482">
    <property type="term" value="F:chondroitin 2-sulfotransferase activity"/>
    <property type="evidence" value="ECO:0000314"/>
    <property type="project" value="UniProtKB"/>
</dbReference>
<dbReference type="GO" id="GO:0102142">
    <property type="term" value="F:dermatan 2-sulfotransferase activity"/>
    <property type="evidence" value="ECO:0000314"/>
    <property type="project" value="UniProtKB"/>
</dbReference>
<dbReference type="GO" id="GO:0008146">
    <property type="term" value="F:sulfotransferase activity"/>
    <property type="evidence" value="ECO:0000318"/>
    <property type="project" value="GO_Central"/>
</dbReference>
<dbReference type="GO" id="GO:0050651">
    <property type="term" value="P:dermatan sulfate proteoglycan biosynthetic process"/>
    <property type="evidence" value="ECO:0000314"/>
    <property type="project" value="UniProtKB"/>
</dbReference>
<dbReference type="GO" id="GO:0030010">
    <property type="term" value="P:establishment of cell polarity"/>
    <property type="evidence" value="ECO:0007669"/>
    <property type="project" value="Ensembl"/>
</dbReference>
<dbReference type="GO" id="GO:0050770">
    <property type="term" value="P:regulation of axonogenesis"/>
    <property type="evidence" value="ECO:0007669"/>
    <property type="project" value="Ensembl"/>
</dbReference>
<dbReference type="FunFam" id="3.40.50.300:FF:000580">
    <property type="entry name" value="uronyl 2-sulfotransferase"/>
    <property type="match status" value="1"/>
</dbReference>
<dbReference type="Gene3D" id="3.40.50.300">
    <property type="entry name" value="P-loop containing nucleotide triphosphate hydrolases"/>
    <property type="match status" value="1"/>
</dbReference>
<dbReference type="InterPro" id="IPR007734">
    <property type="entry name" value="Heparan_SO4_2-O-STrfase"/>
</dbReference>
<dbReference type="InterPro" id="IPR027417">
    <property type="entry name" value="P-loop_NTPase"/>
</dbReference>
<dbReference type="InterPro" id="IPR005331">
    <property type="entry name" value="Sulfotransferase"/>
</dbReference>
<dbReference type="PANTHER" id="PTHR12129">
    <property type="entry name" value="HEPARAN SULFATE 2-O-SULFOTRANSFERASE"/>
    <property type="match status" value="1"/>
</dbReference>
<dbReference type="PANTHER" id="PTHR12129:SF15">
    <property type="entry name" value="URONYL 2-SULFOTRANSFERASE"/>
    <property type="match status" value="1"/>
</dbReference>
<dbReference type="Pfam" id="PF03567">
    <property type="entry name" value="Sulfotransfer_2"/>
    <property type="match status" value="1"/>
</dbReference>
<dbReference type="SUPFAM" id="SSF52540">
    <property type="entry name" value="P-loop containing nucleoside triphosphate hydrolases"/>
    <property type="match status" value="1"/>
</dbReference>